<organism>
    <name type="scientific">Pseudomonas fluorescens (strain Pf0-1)</name>
    <dbReference type="NCBI Taxonomy" id="205922"/>
    <lineage>
        <taxon>Bacteria</taxon>
        <taxon>Pseudomonadati</taxon>
        <taxon>Pseudomonadota</taxon>
        <taxon>Gammaproteobacteria</taxon>
        <taxon>Pseudomonadales</taxon>
        <taxon>Pseudomonadaceae</taxon>
        <taxon>Pseudomonas</taxon>
    </lineage>
</organism>
<protein>
    <recommendedName>
        <fullName evidence="1">Anhydro-N-acetylmuramic acid kinase</fullName>
        <ecNumber evidence="1">2.7.1.170</ecNumber>
    </recommendedName>
    <alternativeName>
        <fullName evidence="1">AnhMurNAc kinase</fullName>
    </alternativeName>
</protein>
<sequence length="363" mass="38607">MALYIGVMSGTSLDGLDIALIEQSSAINLVATHYIPMPDTLRAELLGLCAGGPDEIARSAIAQQNWVKLAAQGIHTLLEQQQLKPEAIRAIGSHGQTIRHEPARGFTVQIGNPALLTELTGITVVSDFRSRDVAAGGQGAPLVPAFHEALFEERTGNRAVLNVGGFSNLSLIEPNKPVAGFDCGPGNVLMDAWIHQQRGENYDRNGQWAASGKVEPTLLKALLSDPFFVTQGPKSTGREVFNLPWLEQQLSCLPGFAAENVQATLLELTALTIVESLQSAQSNTEELLVCGGGAHNVTLMKRLADLLPNAKVASTATHGVDPDWVEAMAFAWLAHCCLEGIAANRPSVTGAKGLRVLGAIYPN</sequence>
<comment type="function">
    <text evidence="1">Catalyzes the specific phosphorylation of 1,6-anhydro-N-acetylmuramic acid (anhMurNAc) with the simultaneous cleavage of the 1,6-anhydro ring, generating MurNAc-6-P. Is required for the utilization of anhMurNAc either imported from the medium or derived from its own cell wall murein, and thus plays a role in cell wall recycling.</text>
</comment>
<comment type="catalytic activity">
    <reaction evidence="1">
        <text>1,6-anhydro-N-acetyl-beta-muramate + ATP + H2O = N-acetyl-D-muramate 6-phosphate + ADP + H(+)</text>
        <dbReference type="Rhea" id="RHEA:24952"/>
        <dbReference type="ChEBI" id="CHEBI:15377"/>
        <dbReference type="ChEBI" id="CHEBI:15378"/>
        <dbReference type="ChEBI" id="CHEBI:30616"/>
        <dbReference type="ChEBI" id="CHEBI:58690"/>
        <dbReference type="ChEBI" id="CHEBI:58722"/>
        <dbReference type="ChEBI" id="CHEBI:456216"/>
        <dbReference type="EC" id="2.7.1.170"/>
    </reaction>
</comment>
<comment type="pathway">
    <text evidence="1">Amino-sugar metabolism; 1,6-anhydro-N-acetylmuramate degradation.</text>
</comment>
<comment type="pathway">
    <text evidence="1">Cell wall biogenesis; peptidoglycan recycling.</text>
</comment>
<comment type="similarity">
    <text evidence="1">Belongs to the anhydro-N-acetylmuramic acid kinase family.</text>
</comment>
<gene>
    <name evidence="1" type="primary">anmK</name>
    <name type="ordered locus">Pfl01_5100</name>
</gene>
<name>ANMK_PSEPF</name>
<dbReference type="EC" id="2.7.1.170" evidence="1"/>
<dbReference type="EMBL" id="CP000094">
    <property type="protein sequence ID" value="ABA76837.1"/>
    <property type="molecule type" value="Genomic_DNA"/>
</dbReference>
<dbReference type="RefSeq" id="WP_011336182.1">
    <property type="nucleotide sequence ID" value="NC_007492.2"/>
</dbReference>
<dbReference type="SMR" id="Q3K5W7"/>
<dbReference type="KEGG" id="pfo:Pfl01_5100"/>
<dbReference type="eggNOG" id="COG2377">
    <property type="taxonomic scope" value="Bacteria"/>
</dbReference>
<dbReference type="HOGENOM" id="CLU_038782_0_0_6"/>
<dbReference type="UniPathway" id="UPA00343"/>
<dbReference type="UniPathway" id="UPA00544"/>
<dbReference type="Proteomes" id="UP000002704">
    <property type="component" value="Chromosome"/>
</dbReference>
<dbReference type="GO" id="GO:0005524">
    <property type="term" value="F:ATP binding"/>
    <property type="evidence" value="ECO:0007669"/>
    <property type="project" value="UniProtKB-UniRule"/>
</dbReference>
<dbReference type="GO" id="GO:0016301">
    <property type="term" value="F:kinase activity"/>
    <property type="evidence" value="ECO:0007669"/>
    <property type="project" value="UniProtKB-KW"/>
</dbReference>
<dbReference type="GO" id="GO:0016773">
    <property type="term" value="F:phosphotransferase activity, alcohol group as acceptor"/>
    <property type="evidence" value="ECO:0007669"/>
    <property type="project" value="UniProtKB-UniRule"/>
</dbReference>
<dbReference type="GO" id="GO:0097175">
    <property type="term" value="P:1,6-anhydro-N-acetyl-beta-muramic acid catabolic process"/>
    <property type="evidence" value="ECO:0007669"/>
    <property type="project" value="UniProtKB-UniRule"/>
</dbReference>
<dbReference type="GO" id="GO:0006040">
    <property type="term" value="P:amino sugar metabolic process"/>
    <property type="evidence" value="ECO:0007669"/>
    <property type="project" value="InterPro"/>
</dbReference>
<dbReference type="GO" id="GO:0009254">
    <property type="term" value="P:peptidoglycan turnover"/>
    <property type="evidence" value="ECO:0007669"/>
    <property type="project" value="UniProtKB-UniRule"/>
</dbReference>
<dbReference type="CDD" id="cd24050">
    <property type="entry name" value="ASKHA_NBD_ANMK"/>
    <property type="match status" value="1"/>
</dbReference>
<dbReference type="Gene3D" id="3.30.420.40">
    <property type="match status" value="2"/>
</dbReference>
<dbReference type="HAMAP" id="MF_01270">
    <property type="entry name" value="AnhMurNAc_kinase"/>
    <property type="match status" value="1"/>
</dbReference>
<dbReference type="InterPro" id="IPR005338">
    <property type="entry name" value="Anhydro_N_Ac-Mur_kinase"/>
</dbReference>
<dbReference type="InterPro" id="IPR043129">
    <property type="entry name" value="ATPase_NBD"/>
</dbReference>
<dbReference type="NCBIfam" id="NF007139">
    <property type="entry name" value="PRK09585.1-3"/>
    <property type="match status" value="1"/>
</dbReference>
<dbReference type="PANTHER" id="PTHR30605">
    <property type="entry name" value="ANHYDRO-N-ACETYLMURAMIC ACID KINASE"/>
    <property type="match status" value="1"/>
</dbReference>
<dbReference type="PANTHER" id="PTHR30605:SF0">
    <property type="entry name" value="ANHYDRO-N-ACETYLMURAMIC ACID KINASE"/>
    <property type="match status" value="1"/>
</dbReference>
<dbReference type="Pfam" id="PF03702">
    <property type="entry name" value="AnmK"/>
    <property type="match status" value="1"/>
</dbReference>
<dbReference type="SUPFAM" id="SSF53067">
    <property type="entry name" value="Actin-like ATPase domain"/>
    <property type="match status" value="1"/>
</dbReference>
<evidence type="ECO:0000255" key="1">
    <source>
        <dbReference type="HAMAP-Rule" id="MF_01270"/>
    </source>
</evidence>
<accession>Q3K5W7</accession>
<reference key="1">
    <citation type="journal article" date="2009" name="Genome Biol.">
        <title>Genomic and genetic analyses of diversity and plant interactions of Pseudomonas fluorescens.</title>
        <authorList>
            <person name="Silby M.W."/>
            <person name="Cerdeno-Tarraga A.M."/>
            <person name="Vernikos G.S."/>
            <person name="Giddens S.R."/>
            <person name="Jackson R.W."/>
            <person name="Preston G.M."/>
            <person name="Zhang X.-X."/>
            <person name="Moon C.D."/>
            <person name="Gehrig S.M."/>
            <person name="Godfrey S.A.C."/>
            <person name="Knight C.G."/>
            <person name="Malone J.G."/>
            <person name="Robinson Z."/>
            <person name="Spiers A.J."/>
            <person name="Harris S."/>
            <person name="Challis G.L."/>
            <person name="Yaxley A.M."/>
            <person name="Harris D."/>
            <person name="Seeger K."/>
            <person name="Murphy L."/>
            <person name="Rutter S."/>
            <person name="Squares R."/>
            <person name="Quail M.A."/>
            <person name="Saunders E."/>
            <person name="Mavromatis K."/>
            <person name="Brettin T.S."/>
            <person name="Bentley S.D."/>
            <person name="Hothersall J."/>
            <person name="Stephens E."/>
            <person name="Thomas C.M."/>
            <person name="Parkhill J."/>
            <person name="Levy S.B."/>
            <person name="Rainey P.B."/>
            <person name="Thomson N.R."/>
        </authorList>
    </citation>
    <scope>NUCLEOTIDE SEQUENCE [LARGE SCALE GENOMIC DNA]</scope>
    <source>
        <strain>Pf0-1</strain>
    </source>
</reference>
<feature type="chain" id="PRO_0000250030" description="Anhydro-N-acetylmuramic acid kinase">
    <location>
        <begin position="1"/>
        <end position="363"/>
    </location>
</feature>
<feature type="binding site" evidence="1">
    <location>
        <begin position="10"/>
        <end position="17"/>
    </location>
    <ligand>
        <name>ATP</name>
        <dbReference type="ChEBI" id="CHEBI:30616"/>
    </ligand>
</feature>
<keyword id="KW-0067">ATP-binding</keyword>
<keyword id="KW-0119">Carbohydrate metabolism</keyword>
<keyword id="KW-0418">Kinase</keyword>
<keyword id="KW-0547">Nucleotide-binding</keyword>
<keyword id="KW-0808">Transferase</keyword>
<proteinExistence type="inferred from homology"/>